<name>DUSA_ECO57</name>
<feature type="chain" id="PRO_0000162064" description="tRNA-dihydrouridine(20/20a) synthase">
    <location>
        <begin position="1"/>
        <end position="345"/>
    </location>
</feature>
<feature type="active site" description="Proton donor" evidence="1">
    <location>
        <position position="114"/>
    </location>
</feature>
<feature type="binding site" evidence="1">
    <location>
        <begin position="32"/>
        <end position="34"/>
    </location>
    <ligand>
        <name>FMN</name>
        <dbReference type="ChEBI" id="CHEBI:58210"/>
    </ligand>
</feature>
<feature type="binding site" evidence="1">
    <location>
        <position position="84"/>
    </location>
    <ligand>
        <name>FMN</name>
        <dbReference type="ChEBI" id="CHEBI:58210"/>
    </ligand>
</feature>
<feature type="binding site" evidence="1">
    <location>
        <position position="153"/>
    </location>
    <ligand>
        <name>FMN</name>
        <dbReference type="ChEBI" id="CHEBI:58210"/>
    </ligand>
</feature>
<feature type="binding site" evidence="1">
    <location>
        <position position="186"/>
    </location>
    <ligand>
        <name>FMN</name>
        <dbReference type="ChEBI" id="CHEBI:58210"/>
    </ligand>
</feature>
<feature type="binding site" evidence="1">
    <location>
        <begin position="226"/>
        <end position="228"/>
    </location>
    <ligand>
        <name>FMN</name>
        <dbReference type="ChEBI" id="CHEBI:58210"/>
    </ligand>
</feature>
<feature type="binding site" evidence="1">
    <location>
        <begin position="248"/>
        <end position="249"/>
    </location>
    <ligand>
        <name>FMN</name>
        <dbReference type="ChEBI" id="CHEBI:58210"/>
    </ligand>
</feature>
<feature type="site" description="Interacts with tRNA" evidence="1">
    <location>
        <position position="111"/>
    </location>
</feature>
<feature type="site" description="Interacts with tRNA; defines subfamily-specific binding signature" evidence="1">
    <location>
        <position position="198"/>
    </location>
</feature>
<feature type="site" description="Interacts with tRNA" evidence="1">
    <location>
        <position position="201"/>
    </location>
</feature>
<feature type="site" description="Interacts with tRNA; defines subfamily-specific binding signature" evidence="1">
    <location>
        <position position="314"/>
    </location>
</feature>
<feature type="site" description="Interacts with tRNA; defines subfamily-specific binding signature" evidence="1">
    <location>
        <position position="317"/>
    </location>
</feature>
<comment type="function">
    <text evidence="1">Catalyzes the synthesis of 5,6-dihydrouridine (D), a modified base found in the D-loop of most tRNAs, via the reduction of the C5-C6 double bond in target uridines. Specifically modifies U20 and U20a in tRNAs.</text>
</comment>
<comment type="catalytic activity">
    <reaction evidence="1">
        <text>5,6-dihydrouridine(20) in tRNA + NADP(+) = uridine(20) in tRNA + NADPH + H(+)</text>
        <dbReference type="Rhea" id="RHEA:53336"/>
        <dbReference type="Rhea" id="RHEA-COMP:13533"/>
        <dbReference type="Rhea" id="RHEA-COMP:13534"/>
        <dbReference type="ChEBI" id="CHEBI:15378"/>
        <dbReference type="ChEBI" id="CHEBI:57783"/>
        <dbReference type="ChEBI" id="CHEBI:58349"/>
        <dbReference type="ChEBI" id="CHEBI:65315"/>
        <dbReference type="ChEBI" id="CHEBI:74443"/>
        <dbReference type="EC" id="1.3.1.91"/>
    </reaction>
</comment>
<comment type="catalytic activity">
    <reaction evidence="1">
        <text>5,6-dihydrouridine(20) in tRNA + NAD(+) = uridine(20) in tRNA + NADH + H(+)</text>
        <dbReference type="Rhea" id="RHEA:53340"/>
        <dbReference type="Rhea" id="RHEA-COMP:13533"/>
        <dbReference type="Rhea" id="RHEA-COMP:13534"/>
        <dbReference type="ChEBI" id="CHEBI:15378"/>
        <dbReference type="ChEBI" id="CHEBI:57540"/>
        <dbReference type="ChEBI" id="CHEBI:57945"/>
        <dbReference type="ChEBI" id="CHEBI:65315"/>
        <dbReference type="ChEBI" id="CHEBI:74443"/>
        <dbReference type="EC" id="1.3.1.91"/>
    </reaction>
</comment>
<comment type="catalytic activity">
    <reaction evidence="1">
        <text>5,6-dihydrouridine(20a) in tRNA + NADP(+) = uridine(20a) in tRNA + NADPH + H(+)</text>
        <dbReference type="Rhea" id="RHEA:53344"/>
        <dbReference type="Rhea" id="RHEA-COMP:13535"/>
        <dbReference type="Rhea" id="RHEA-COMP:13536"/>
        <dbReference type="ChEBI" id="CHEBI:15378"/>
        <dbReference type="ChEBI" id="CHEBI:57783"/>
        <dbReference type="ChEBI" id="CHEBI:58349"/>
        <dbReference type="ChEBI" id="CHEBI:65315"/>
        <dbReference type="ChEBI" id="CHEBI:74443"/>
    </reaction>
</comment>
<comment type="catalytic activity">
    <reaction evidence="1">
        <text>5,6-dihydrouridine(20a) in tRNA + NAD(+) = uridine(20a) in tRNA + NADH + H(+)</text>
        <dbReference type="Rhea" id="RHEA:53348"/>
        <dbReference type="Rhea" id="RHEA-COMP:13535"/>
        <dbReference type="Rhea" id="RHEA-COMP:13536"/>
        <dbReference type="ChEBI" id="CHEBI:15378"/>
        <dbReference type="ChEBI" id="CHEBI:57540"/>
        <dbReference type="ChEBI" id="CHEBI:57945"/>
        <dbReference type="ChEBI" id="CHEBI:65315"/>
        <dbReference type="ChEBI" id="CHEBI:74443"/>
    </reaction>
</comment>
<comment type="cofactor">
    <cofactor evidence="1">
        <name>FMN</name>
        <dbReference type="ChEBI" id="CHEBI:58210"/>
    </cofactor>
</comment>
<comment type="similarity">
    <text evidence="1">Belongs to the Dus family. DusA subfamily.</text>
</comment>
<accession>Q8X5V6</accession>
<gene>
    <name evidence="1" type="primary">dusA</name>
    <name type="ordered locus">Z5647</name>
    <name type="ordered locus">ECs5031</name>
</gene>
<reference key="1">
    <citation type="journal article" date="2001" name="Nature">
        <title>Genome sequence of enterohaemorrhagic Escherichia coli O157:H7.</title>
        <authorList>
            <person name="Perna N.T."/>
            <person name="Plunkett G. III"/>
            <person name="Burland V."/>
            <person name="Mau B."/>
            <person name="Glasner J.D."/>
            <person name="Rose D.J."/>
            <person name="Mayhew G.F."/>
            <person name="Evans P.S."/>
            <person name="Gregor J."/>
            <person name="Kirkpatrick H.A."/>
            <person name="Posfai G."/>
            <person name="Hackett J."/>
            <person name="Klink S."/>
            <person name="Boutin A."/>
            <person name="Shao Y."/>
            <person name="Miller L."/>
            <person name="Grotbeck E.J."/>
            <person name="Davis N.W."/>
            <person name="Lim A."/>
            <person name="Dimalanta E.T."/>
            <person name="Potamousis K."/>
            <person name="Apodaca J."/>
            <person name="Anantharaman T.S."/>
            <person name="Lin J."/>
            <person name="Yen G."/>
            <person name="Schwartz D.C."/>
            <person name="Welch R.A."/>
            <person name="Blattner F.R."/>
        </authorList>
    </citation>
    <scope>NUCLEOTIDE SEQUENCE [LARGE SCALE GENOMIC DNA]</scope>
    <source>
        <strain>O157:H7 / EDL933 / ATCC 700927 / EHEC</strain>
    </source>
</reference>
<reference key="2">
    <citation type="journal article" date="2001" name="DNA Res.">
        <title>Complete genome sequence of enterohemorrhagic Escherichia coli O157:H7 and genomic comparison with a laboratory strain K-12.</title>
        <authorList>
            <person name="Hayashi T."/>
            <person name="Makino K."/>
            <person name="Ohnishi M."/>
            <person name="Kurokawa K."/>
            <person name="Ishii K."/>
            <person name="Yokoyama K."/>
            <person name="Han C.-G."/>
            <person name="Ohtsubo E."/>
            <person name="Nakayama K."/>
            <person name="Murata T."/>
            <person name="Tanaka M."/>
            <person name="Tobe T."/>
            <person name="Iida T."/>
            <person name="Takami H."/>
            <person name="Honda T."/>
            <person name="Sasakawa C."/>
            <person name="Ogasawara N."/>
            <person name="Yasunaga T."/>
            <person name="Kuhara S."/>
            <person name="Shiba T."/>
            <person name="Hattori M."/>
            <person name="Shinagawa H."/>
        </authorList>
    </citation>
    <scope>NUCLEOTIDE SEQUENCE [LARGE SCALE GENOMIC DNA]</scope>
    <source>
        <strain>O157:H7 / Sakai / RIMD 0509952 / EHEC</strain>
    </source>
</reference>
<organism>
    <name type="scientific">Escherichia coli O157:H7</name>
    <dbReference type="NCBI Taxonomy" id="83334"/>
    <lineage>
        <taxon>Bacteria</taxon>
        <taxon>Pseudomonadati</taxon>
        <taxon>Pseudomonadota</taxon>
        <taxon>Gammaproteobacteria</taxon>
        <taxon>Enterobacterales</taxon>
        <taxon>Enterobacteriaceae</taxon>
        <taxon>Escherichia</taxon>
    </lineage>
</organism>
<dbReference type="EC" id="1.3.1.-" evidence="1"/>
<dbReference type="EC" id="1.3.1.91" evidence="1"/>
<dbReference type="EMBL" id="AE005174">
    <property type="protein sequence ID" value="AAG59247.1"/>
    <property type="molecule type" value="Genomic_DNA"/>
</dbReference>
<dbReference type="EMBL" id="BA000007">
    <property type="protein sequence ID" value="BAB38454.1"/>
    <property type="molecule type" value="Genomic_DNA"/>
</dbReference>
<dbReference type="PIR" id="C86098">
    <property type="entry name" value="C86098"/>
</dbReference>
<dbReference type="PIR" id="G91257">
    <property type="entry name" value="G91257"/>
</dbReference>
<dbReference type="PIR" id="H65212">
    <property type="entry name" value="H65212"/>
</dbReference>
<dbReference type="RefSeq" id="NP_313058.1">
    <property type="nucleotide sequence ID" value="NC_002695.1"/>
</dbReference>
<dbReference type="RefSeq" id="WP_001298868.1">
    <property type="nucleotide sequence ID" value="NZ_SDVX01000004.1"/>
</dbReference>
<dbReference type="SMR" id="Q8X5V6"/>
<dbReference type="STRING" id="155864.Z5647"/>
<dbReference type="GeneID" id="914304"/>
<dbReference type="GeneID" id="93777783"/>
<dbReference type="KEGG" id="ece:Z5647"/>
<dbReference type="KEGG" id="ecs:ECs_5031"/>
<dbReference type="PATRIC" id="fig|386585.9.peg.5254"/>
<dbReference type="eggNOG" id="COG0042">
    <property type="taxonomic scope" value="Bacteria"/>
</dbReference>
<dbReference type="HOGENOM" id="CLU_013299_2_1_6"/>
<dbReference type="Proteomes" id="UP000000558">
    <property type="component" value="Chromosome"/>
</dbReference>
<dbReference type="Proteomes" id="UP000002519">
    <property type="component" value="Chromosome"/>
</dbReference>
<dbReference type="GO" id="GO:0050660">
    <property type="term" value="F:flavin adenine dinucleotide binding"/>
    <property type="evidence" value="ECO:0007669"/>
    <property type="project" value="InterPro"/>
</dbReference>
<dbReference type="GO" id="GO:0010181">
    <property type="term" value="F:FMN binding"/>
    <property type="evidence" value="ECO:0007669"/>
    <property type="project" value="UniProtKB-UniRule"/>
</dbReference>
<dbReference type="GO" id="GO:0000049">
    <property type="term" value="F:tRNA binding"/>
    <property type="evidence" value="ECO:0007669"/>
    <property type="project" value="UniProtKB-UniRule"/>
</dbReference>
<dbReference type="GO" id="GO:0102264">
    <property type="term" value="F:tRNA-dihydrouridine20 synthase activity"/>
    <property type="evidence" value="ECO:0007669"/>
    <property type="project" value="UniProtKB-EC"/>
</dbReference>
<dbReference type="GO" id="GO:0102266">
    <property type="term" value="F:tRNA-dihydrouridine20a synthase activity"/>
    <property type="evidence" value="ECO:0007669"/>
    <property type="project" value="RHEA"/>
</dbReference>
<dbReference type="CDD" id="cd02801">
    <property type="entry name" value="DUS_like_FMN"/>
    <property type="match status" value="1"/>
</dbReference>
<dbReference type="FunFam" id="1.20.120.1460:FF:000001">
    <property type="entry name" value="tRNA-dihydrouridine(20/20a) synthase"/>
    <property type="match status" value="1"/>
</dbReference>
<dbReference type="FunFam" id="3.20.20.70:FF:000083">
    <property type="entry name" value="tRNA-dihydrouridine(20/20a) synthase"/>
    <property type="match status" value="1"/>
</dbReference>
<dbReference type="Gene3D" id="1.20.120.1460">
    <property type="match status" value="1"/>
</dbReference>
<dbReference type="Gene3D" id="3.20.20.70">
    <property type="entry name" value="Aldolase class I"/>
    <property type="match status" value="1"/>
</dbReference>
<dbReference type="HAMAP" id="MF_02041">
    <property type="entry name" value="DusA_subfam"/>
    <property type="match status" value="1"/>
</dbReference>
<dbReference type="InterPro" id="IPR013785">
    <property type="entry name" value="Aldolase_TIM"/>
</dbReference>
<dbReference type="InterPro" id="IPR035587">
    <property type="entry name" value="DUS-like_FMN-bd"/>
</dbReference>
<dbReference type="InterPro" id="IPR001269">
    <property type="entry name" value="DUS_fam"/>
</dbReference>
<dbReference type="InterPro" id="IPR004653">
    <property type="entry name" value="DusA"/>
</dbReference>
<dbReference type="InterPro" id="IPR018517">
    <property type="entry name" value="tRNA_hU_synthase_CS"/>
</dbReference>
<dbReference type="NCBIfam" id="NF008774">
    <property type="entry name" value="PRK11815.1"/>
    <property type="match status" value="1"/>
</dbReference>
<dbReference type="NCBIfam" id="TIGR00742">
    <property type="entry name" value="yjbN"/>
    <property type="match status" value="1"/>
</dbReference>
<dbReference type="PANTHER" id="PTHR42907">
    <property type="entry name" value="FMN-LINKED OXIDOREDUCTASES SUPERFAMILY PROTEIN"/>
    <property type="match status" value="1"/>
</dbReference>
<dbReference type="PANTHER" id="PTHR42907:SF1">
    <property type="entry name" value="FMN-LINKED OXIDOREDUCTASES SUPERFAMILY PROTEIN"/>
    <property type="match status" value="1"/>
</dbReference>
<dbReference type="Pfam" id="PF01207">
    <property type="entry name" value="Dus"/>
    <property type="match status" value="1"/>
</dbReference>
<dbReference type="PIRSF" id="PIRSF006621">
    <property type="entry name" value="Dus"/>
    <property type="match status" value="1"/>
</dbReference>
<dbReference type="SUPFAM" id="SSF51395">
    <property type="entry name" value="FMN-linked oxidoreductases"/>
    <property type="match status" value="1"/>
</dbReference>
<dbReference type="PROSITE" id="PS01136">
    <property type="entry name" value="UPF0034"/>
    <property type="match status" value="1"/>
</dbReference>
<protein>
    <recommendedName>
        <fullName evidence="1">tRNA-dihydrouridine(20/20a) synthase</fullName>
        <ecNumber evidence="1">1.3.1.-</ecNumber>
        <ecNumber evidence="1">1.3.1.91</ecNumber>
    </recommendedName>
    <alternativeName>
        <fullName evidence="1">U20-specific dihydrouridine synthase</fullName>
        <shortName evidence="1">U20-specific Dus</shortName>
    </alternativeName>
    <alternativeName>
        <fullName evidence="1">tRNA-dihydrouridine synthase A</fullName>
    </alternativeName>
</protein>
<keyword id="KW-0285">Flavoprotein</keyword>
<keyword id="KW-0288">FMN</keyword>
<keyword id="KW-0521">NADP</keyword>
<keyword id="KW-0560">Oxidoreductase</keyword>
<keyword id="KW-1185">Reference proteome</keyword>
<keyword id="KW-0694">RNA-binding</keyword>
<keyword id="KW-0819">tRNA processing</keyword>
<keyword id="KW-0820">tRNA-binding</keyword>
<evidence type="ECO:0000255" key="1">
    <source>
        <dbReference type="HAMAP-Rule" id="MF_02041"/>
    </source>
</evidence>
<proteinExistence type="inferred from homology"/>
<sequence length="345" mass="38468">MHGNSEMQKINQTSAMPEKTDVHWSGRFSVAPMLDWTDRHCRYFLRLLSRNTLLYTEMVTTGAIIHGKGDYLAYSEEEHPVALQLGGSDPAALAQCAKLAEARGYDEINLNVGCPSDRVQNGMFGACLMGNAQLVADCVKAMRDVVSIPVTVKTRIGIDDQDSYEFLCDFINTVSGKGECEMFIIHARKAWLSGLSPKENREIPPLDYPRVYQLKRDFPHLTMSINGGIKSLEEAKAHLQHMDGVMVGREAYQNPGILAAVDREIFGSSDTDADPVAVVRAMYPYIERELSQGTYLGHITRHMLGLFQGIPGARQWRRYLSENAHKAGADINVLEHALKLVADKR</sequence>